<keyword id="KW-0238">DNA-binding</keyword>
<keyword id="KW-1185">Reference proteome</keyword>
<keyword id="KW-0804">Transcription</keyword>
<keyword id="KW-0805">Transcription regulation</keyword>
<protein>
    <recommendedName>
        <fullName evidence="1">Transcription elongation factor GreA</fullName>
    </recommendedName>
    <alternativeName>
        <fullName evidence="1">Transcript cleavage factor GreA</fullName>
    </alternativeName>
</protein>
<feature type="chain" id="PRO_1000190219" description="Transcription elongation factor GreA">
    <location>
        <begin position="1"/>
        <end position="158"/>
    </location>
</feature>
<sequence>MEKVPITIRGFAALEQELKHRQQVERPRIIQAIAEARALGDLSENAEYHAAKEAQSLNEGRVLELESLISRAEVIDVAKLSGSKVKFGATVQLIDEDTEEEKTYQIVGEPEADVRSGRVSITSPVARALIGKGVGDTVEVSTPGGGKSYEIVGISFSG</sequence>
<name>GREA_METNO</name>
<gene>
    <name evidence="1" type="primary">greA</name>
    <name type="ordered locus">Mnod_4421</name>
</gene>
<organism>
    <name type="scientific">Methylobacterium nodulans (strain LMG 21967 / CNCM I-2342 / ORS 2060)</name>
    <dbReference type="NCBI Taxonomy" id="460265"/>
    <lineage>
        <taxon>Bacteria</taxon>
        <taxon>Pseudomonadati</taxon>
        <taxon>Pseudomonadota</taxon>
        <taxon>Alphaproteobacteria</taxon>
        <taxon>Hyphomicrobiales</taxon>
        <taxon>Methylobacteriaceae</taxon>
        <taxon>Methylobacterium</taxon>
    </lineage>
</organism>
<comment type="function">
    <text evidence="1">Necessary for efficient RNA polymerase transcription elongation past template-encoded arresting sites. The arresting sites in DNA have the property of trapping a certain fraction of elongating RNA polymerases that pass through, resulting in locked ternary complexes. Cleavage of the nascent transcript by cleavage factors such as GreA or GreB allows the resumption of elongation from the new 3'terminus. GreA releases sequences of 2 to 3 nucleotides.</text>
</comment>
<comment type="similarity">
    <text evidence="1">Belongs to the GreA/GreB family.</text>
</comment>
<dbReference type="EMBL" id="CP001349">
    <property type="protein sequence ID" value="ACL59292.1"/>
    <property type="molecule type" value="Genomic_DNA"/>
</dbReference>
<dbReference type="RefSeq" id="WP_015930932.1">
    <property type="nucleotide sequence ID" value="NC_011894.1"/>
</dbReference>
<dbReference type="SMR" id="B8IBN8"/>
<dbReference type="STRING" id="460265.Mnod_4421"/>
<dbReference type="KEGG" id="mno:Mnod_4421"/>
<dbReference type="eggNOG" id="COG0782">
    <property type="taxonomic scope" value="Bacteria"/>
</dbReference>
<dbReference type="HOGENOM" id="CLU_101379_2_0_5"/>
<dbReference type="OrthoDB" id="9808774at2"/>
<dbReference type="Proteomes" id="UP000008207">
    <property type="component" value="Chromosome"/>
</dbReference>
<dbReference type="GO" id="GO:0003677">
    <property type="term" value="F:DNA binding"/>
    <property type="evidence" value="ECO:0007669"/>
    <property type="project" value="UniProtKB-UniRule"/>
</dbReference>
<dbReference type="GO" id="GO:0070063">
    <property type="term" value="F:RNA polymerase binding"/>
    <property type="evidence" value="ECO:0007669"/>
    <property type="project" value="InterPro"/>
</dbReference>
<dbReference type="GO" id="GO:0006354">
    <property type="term" value="P:DNA-templated transcription elongation"/>
    <property type="evidence" value="ECO:0007669"/>
    <property type="project" value="TreeGrafter"/>
</dbReference>
<dbReference type="GO" id="GO:0032784">
    <property type="term" value="P:regulation of DNA-templated transcription elongation"/>
    <property type="evidence" value="ECO:0007669"/>
    <property type="project" value="UniProtKB-UniRule"/>
</dbReference>
<dbReference type="FunFam" id="1.10.287.180:FF:000001">
    <property type="entry name" value="Transcription elongation factor GreA"/>
    <property type="match status" value="1"/>
</dbReference>
<dbReference type="FunFam" id="3.10.50.30:FF:000001">
    <property type="entry name" value="Transcription elongation factor GreA"/>
    <property type="match status" value="1"/>
</dbReference>
<dbReference type="Gene3D" id="3.10.50.30">
    <property type="entry name" value="Transcription elongation factor, GreA/GreB, C-terminal domain"/>
    <property type="match status" value="1"/>
</dbReference>
<dbReference type="Gene3D" id="1.10.287.180">
    <property type="entry name" value="Transcription elongation factor, GreA/GreB, N-terminal domain"/>
    <property type="match status" value="1"/>
</dbReference>
<dbReference type="HAMAP" id="MF_00105">
    <property type="entry name" value="GreA_GreB"/>
    <property type="match status" value="1"/>
</dbReference>
<dbReference type="InterPro" id="IPR036953">
    <property type="entry name" value="GreA/GreB_C_sf"/>
</dbReference>
<dbReference type="InterPro" id="IPR018151">
    <property type="entry name" value="TF_GreA/GreB_CS"/>
</dbReference>
<dbReference type="InterPro" id="IPR006359">
    <property type="entry name" value="Tscrpt_elong_fac_GreA"/>
</dbReference>
<dbReference type="InterPro" id="IPR028624">
    <property type="entry name" value="Tscrpt_elong_fac_GreA/B"/>
</dbReference>
<dbReference type="InterPro" id="IPR001437">
    <property type="entry name" value="Tscrpt_elong_fac_GreA/B_C"/>
</dbReference>
<dbReference type="InterPro" id="IPR023459">
    <property type="entry name" value="Tscrpt_elong_fac_GreA/B_fam"/>
</dbReference>
<dbReference type="InterPro" id="IPR022691">
    <property type="entry name" value="Tscrpt_elong_fac_GreA/B_N"/>
</dbReference>
<dbReference type="InterPro" id="IPR036805">
    <property type="entry name" value="Tscrpt_elong_fac_GreA/B_N_sf"/>
</dbReference>
<dbReference type="NCBIfam" id="TIGR01462">
    <property type="entry name" value="greA"/>
    <property type="match status" value="1"/>
</dbReference>
<dbReference type="NCBIfam" id="NF001261">
    <property type="entry name" value="PRK00226.1-2"/>
    <property type="match status" value="1"/>
</dbReference>
<dbReference type="NCBIfam" id="NF001263">
    <property type="entry name" value="PRK00226.1-4"/>
    <property type="match status" value="1"/>
</dbReference>
<dbReference type="NCBIfam" id="NF001264">
    <property type="entry name" value="PRK00226.1-5"/>
    <property type="match status" value="1"/>
</dbReference>
<dbReference type="PANTHER" id="PTHR30437">
    <property type="entry name" value="TRANSCRIPTION ELONGATION FACTOR GREA"/>
    <property type="match status" value="1"/>
</dbReference>
<dbReference type="PANTHER" id="PTHR30437:SF4">
    <property type="entry name" value="TRANSCRIPTION ELONGATION FACTOR GREA"/>
    <property type="match status" value="1"/>
</dbReference>
<dbReference type="Pfam" id="PF01272">
    <property type="entry name" value="GreA_GreB"/>
    <property type="match status" value="1"/>
</dbReference>
<dbReference type="Pfam" id="PF03449">
    <property type="entry name" value="GreA_GreB_N"/>
    <property type="match status" value="1"/>
</dbReference>
<dbReference type="PIRSF" id="PIRSF006092">
    <property type="entry name" value="GreA_GreB"/>
    <property type="match status" value="1"/>
</dbReference>
<dbReference type="SUPFAM" id="SSF54534">
    <property type="entry name" value="FKBP-like"/>
    <property type="match status" value="1"/>
</dbReference>
<dbReference type="SUPFAM" id="SSF46557">
    <property type="entry name" value="GreA transcript cleavage protein, N-terminal domain"/>
    <property type="match status" value="1"/>
</dbReference>
<dbReference type="PROSITE" id="PS00829">
    <property type="entry name" value="GREAB_1"/>
    <property type="match status" value="1"/>
</dbReference>
<dbReference type="PROSITE" id="PS00830">
    <property type="entry name" value="GREAB_2"/>
    <property type="match status" value="1"/>
</dbReference>
<proteinExistence type="inferred from homology"/>
<reference key="1">
    <citation type="submission" date="2009-01" db="EMBL/GenBank/DDBJ databases">
        <title>Complete sequence of chromosome of Methylobacterium nodulans ORS 2060.</title>
        <authorList>
            <consortium name="US DOE Joint Genome Institute"/>
            <person name="Lucas S."/>
            <person name="Copeland A."/>
            <person name="Lapidus A."/>
            <person name="Glavina del Rio T."/>
            <person name="Dalin E."/>
            <person name="Tice H."/>
            <person name="Bruce D."/>
            <person name="Goodwin L."/>
            <person name="Pitluck S."/>
            <person name="Sims D."/>
            <person name="Brettin T."/>
            <person name="Detter J.C."/>
            <person name="Han C."/>
            <person name="Larimer F."/>
            <person name="Land M."/>
            <person name="Hauser L."/>
            <person name="Kyrpides N."/>
            <person name="Ivanova N."/>
            <person name="Marx C.J."/>
            <person name="Richardson P."/>
        </authorList>
    </citation>
    <scope>NUCLEOTIDE SEQUENCE [LARGE SCALE GENOMIC DNA]</scope>
    <source>
        <strain>LMG 21967 / CNCM I-2342 / ORS 2060</strain>
    </source>
</reference>
<accession>B8IBN8</accession>
<evidence type="ECO:0000255" key="1">
    <source>
        <dbReference type="HAMAP-Rule" id="MF_00105"/>
    </source>
</evidence>